<organism>
    <name type="scientific">Acinonyx jubatus</name>
    <name type="common">Cheetah</name>
    <dbReference type="NCBI Taxonomy" id="32536"/>
    <lineage>
        <taxon>Eukaryota</taxon>
        <taxon>Metazoa</taxon>
        <taxon>Chordata</taxon>
        <taxon>Craniata</taxon>
        <taxon>Vertebrata</taxon>
        <taxon>Euteleostomi</taxon>
        <taxon>Mammalia</taxon>
        <taxon>Eutheria</taxon>
        <taxon>Laurasiatheria</taxon>
        <taxon>Carnivora</taxon>
        <taxon>Feliformia</taxon>
        <taxon>Felidae</taxon>
        <taxon>Felinae</taxon>
        <taxon>Acinonyx</taxon>
    </lineage>
</organism>
<accession>P0DP52</accession>
<feature type="signal peptide" evidence="2">
    <location>
        <begin position="1"/>
        <end position="22"/>
    </location>
</feature>
<feature type="chain" id="PRO_0000440147" description="Proapolipoprotein C-II">
    <location>
        <begin position="23"/>
        <end position="101"/>
    </location>
</feature>
<feature type="propeptide" id="PRO_0000440148" description="Removed in mature form" evidence="1">
    <location>
        <begin position="23"/>
        <end position="28"/>
    </location>
</feature>
<feature type="chain" id="PRO_0000440149" description="Apolipoprotein C-II" evidence="1">
    <location>
        <begin position="29"/>
        <end position="101"/>
    </location>
</feature>
<feature type="region of interest" description="Lipid binding" evidence="1">
    <location>
        <begin position="66"/>
        <end position="74"/>
    </location>
</feature>
<feature type="region of interest" description="Lipoprotein lipase cofactor" evidence="1">
    <location>
        <begin position="78"/>
        <end position="101"/>
    </location>
</feature>
<proteinExistence type="inferred from homology"/>
<reference key="1">
    <citation type="submission" date="2015-10" db="EMBL/GenBank/DDBJ databases">
        <title>Genomic legacy of the African cheetah, Acinonyx jubatus.</title>
        <authorList>
            <person name="Dobrynin P."/>
            <person name="Liu S."/>
            <person name="Tamazian G."/>
            <person name="Xiong Z."/>
            <person name="Yurchenko A."/>
            <person name="Krasheninnikova K."/>
            <person name="Kliver S."/>
            <person name="Koepfli K.-P."/>
            <person name="Johnson W."/>
            <person name="Kuderna L."/>
            <person name="Garcia-Perez R."/>
            <person name="Montero M.D.M."/>
            <person name="Godinez R."/>
            <person name="Makunin A."/>
            <person name="Komissarov A."/>
            <person name="Brukhin V."/>
            <person name="Qiu W."/>
            <person name="Zhou L."/>
            <person name="Li F."/>
            <person name="Yi J."/>
            <person name="Driscoll C."/>
            <person name="Antunes A."/>
            <person name="Oleksyk T.K."/>
            <person name="Eizirik E."/>
            <person name="Perelman P."/>
            <person name="Roelke' M."/>
            <person name="Wildt D."/>
            <person name="Diekhans M."/>
            <person name="Marques-Bonet T."/>
            <person name="Schmidt-Kuntzel A."/>
            <person name="Marker L."/>
            <person name="Bhak J."/>
            <person name="Wang J."/>
            <person name="Zhang G."/>
            <person name="Obrien S."/>
        </authorList>
    </citation>
    <scope>NUCLEOTIDE SEQUENCE [LARGE SCALE GENOMIC DNA]</scope>
</reference>
<reference key="2">
    <citation type="unpublished observations" date="2017-04">
        <authorList>
            <person name="Puppione D.L."/>
        </authorList>
    </citation>
    <scope>IDENTIFICATION</scope>
</reference>
<evidence type="ECO:0000250" key="1">
    <source>
        <dbReference type="UniProtKB" id="P02655"/>
    </source>
</evidence>
<evidence type="ECO:0000255" key="2"/>
<evidence type="ECO:0000305" key="3"/>
<keyword id="KW-0162">Chylomicron</keyword>
<keyword id="KW-0325">Glycoprotein</keyword>
<keyword id="KW-0345">HDL</keyword>
<keyword id="KW-0427">LDL</keyword>
<keyword id="KW-0442">Lipid degradation</keyword>
<keyword id="KW-0443">Lipid metabolism</keyword>
<keyword id="KW-0445">Lipid transport</keyword>
<keyword id="KW-1185">Reference proteome</keyword>
<keyword id="KW-0964">Secreted</keyword>
<keyword id="KW-0730">Sialic acid</keyword>
<keyword id="KW-0732">Signal</keyword>
<keyword id="KW-0813">Transport</keyword>
<keyword id="KW-0850">VLDL</keyword>
<protein>
    <recommendedName>
        <fullName>Apolipoprotein C-II</fullName>
        <shortName>Apo-CII</shortName>
        <shortName>ApoC-II</shortName>
    </recommendedName>
    <alternativeName>
        <fullName>Apolipoprotein C2</fullName>
    </alternativeName>
    <component>
        <recommendedName>
            <fullName>Proapolipoprotein C-II</fullName>
            <shortName>ProapoC-II</shortName>
        </recommendedName>
    </component>
</protein>
<sequence>MGTRCLLVLLLVLLVLRCDVQGDDMARQDEATGPTLLSQMQESLYSYWGSAKAAAQDLYEKTYLTAVDEKIRDMYSTSTAAVRIYTGILTDQILSMLSGDS</sequence>
<name>APOC2_ACIJB</name>
<comment type="function">
    <text evidence="1">Component of chylomicrons, very low-density lipoproteins (VLDL), low-density lipoproteins (LDL), and high-density lipoproteins (HDL) in plasma. Plays an important role in lipoprotein metabolism as an activator of lipoprotein lipase, the enzyme which hydrolyzes the triacylglycerols on chylomicrons and VLDL.</text>
</comment>
<comment type="subcellular location">
    <subcellularLocation>
        <location evidence="1">Secreted</location>
    </subcellularLocation>
</comment>
<comment type="PTM">
    <text evidence="1">Proapolipoprotein C-II is synthesized as a sialic acid containing glycoprotein which is subsequently desialylated prior to its proteolytic processing.</text>
</comment>
<comment type="PTM">
    <text evidence="1">Proapolipoprotein C-II, the major form found in plasma undergoes proteolytic cleavage of its N-terminal hexapeptide to generate the mature form apolipoprotein C-II, which occurs as the minor form in plasma.</text>
</comment>
<comment type="similarity">
    <text evidence="3">Belongs to the apolipoprotein C2 family.</text>
</comment>
<gene>
    <name type="primary">APOC2</name>
</gene>
<dbReference type="EMBL" id="LLWD01000328">
    <property type="status" value="NOT_ANNOTATED_CDS"/>
    <property type="molecule type" value="Genomic_DNA"/>
</dbReference>
<dbReference type="RefSeq" id="XP_026893563.1">
    <property type="nucleotide sequence ID" value="XM_027037762.2"/>
</dbReference>
<dbReference type="SMR" id="P0DP52"/>
<dbReference type="GeneID" id="106973667"/>
<dbReference type="Proteomes" id="UP000504626">
    <property type="component" value="Unplaced"/>
</dbReference>
<dbReference type="GO" id="GO:0042627">
    <property type="term" value="C:chylomicron"/>
    <property type="evidence" value="ECO:0007669"/>
    <property type="project" value="UniProtKB-KW"/>
</dbReference>
<dbReference type="GO" id="GO:0034364">
    <property type="term" value="C:high-density lipoprotein particle"/>
    <property type="evidence" value="ECO:0007669"/>
    <property type="project" value="UniProtKB-KW"/>
</dbReference>
<dbReference type="GO" id="GO:0034362">
    <property type="term" value="C:low-density lipoprotein particle"/>
    <property type="evidence" value="ECO:0007669"/>
    <property type="project" value="UniProtKB-KW"/>
</dbReference>
<dbReference type="GO" id="GO:0034361">
    <property type="term" value="C:very-low-density lipoprotein particle"/>
    <property type="evidence" value="ECO:0007669"/>
    <property type="project" value="UniProtKB-KW"/>
</dbReference>
<dbReference type="GO" id="GO:0016004">
    <property type="term" value="F:phospholipase activator activity"/>
    <property type="evidence" value="ECO:0007669"/>
    <property type="project" value="TreeGrafter"/>
</dbReference>
<dbReference type="GO" id="GO:0043274">
    <property type="term" value="F:phospholipase binding"/>
    <property type="evidence" value="ECO:0007669"/>
    <property type="project" value="TreeGrafter"/>
</dbReference>
<dbReference type="GO" id="GO:0016042">
    <property type="term" value="P:lipid catabolic process"/>
    <property type="evidence" value="ECO:0007669"/>
    <property type="project" value="UniProtKB-KW"/>
</dbReference>
<dbReference type="GO" id="GO:0006869">
    <property type="term" value="P:lipid transport"/>
    <property type="evidence" value="ECO:0007669"/>
    <property type="project" value="UniProtKB-KW"/>
</dbReference>
<dbReference type="GO" id="GO:0060697">
    <property type="term" value="P:positive regulation of phospholipid catabolic process"/>
    <property type="evidence" value="ECO:0007669"/>
    <property type="project" value="TreeGrafter"/>
</dbReference>
<dbReference type="FunFam" id="1.10.1440.10:FF:000001">
    <property type="entry name" value="Apolipoprotein C-II"/>
    <property type="match status" value="1"/>
</dbReference>
<dbReference type="Gene3D" id="1.10.1440.10">
    <property type="entry name" value="Apolipoprotein C-II"/>
    <property type="match status" value="1"/>
</dbReference>
<dbReference type="InterPro" id="IPR008019">
    <property type="entry name" value="Apo-CII"/>
</dbReference>
<dbReference type="InterPro" id="IPR023121">
    <property type="entry name" value="ApoC-II_dom_sf"/>
</dbReference>
<dbReference type="PANTHER" id="PTHR16566">
    <property type="entry name" value="APOLIPOPROTEIN C-II"/>
    <property type="match status" value="1"/>
</dbReference>
<dbReference type="PANTHER" id="PTHR16566:SF0">
    <property type="entry name" value="APOLIPOPROTEIN C-II"/>
    <property type="match status" value="1"/>
</dbReference>
<dbReference type="Pfam" id="PF05355">
    <property type="entry name" value="Apo-CII"/>
    <property type="match status" value="1"/>
</dbReference>